<evidence type="ECO:0000255" key="1">
    <source>
        <dbReference type="HAMAP-Rule" id="MF_00600"/>
    </source>
</evidence>
<evidence type="ECO:0000305" key="2"/>
<accession>P31294</accession>
<comment type="function">
    <text evidence="1">Together with its co-chaperonin GroES, plays an essential role in assisting protein folding. The GroEL-GroES system forms a nano-cage that allows encapsulation of the non-native substrate proteins and provides a physical environment optimized to promote and accelerate protein folding.</text>
</comment>
<comment type="catalytic activity">
    <reaction evidence="1">
        <text>ATP + H2O + a folded polypeptide = ADP + phosphate + an unfolded polypeptide.</text>
        <dbReference type="EC" id="5.6.1.7"/>
    </reaction>
</comment>
<comment type="subunit">
    <text evidence="1">Forms a cylinder of 14 subunits composed of two heptameric rings stacked back-to-back. Interacts with the co-chaperonin GroES.</text>
</comment>
<comment type="subcellular location">
    <subcellularLocation>
        <location evidence="1">Cytoplasm</location>
    </subcellularLocation>
</comment>
<comment type="similarity">
    <text evidence="1">Belongs to the chaperonin (HSP60) family.</text>
</comment>
<name>CH60_HAEDU</name>
<sequence>MAIKDVKFGNDARVKMLKGVNILADAVKVTLGPKGRNVVLDKAYGAPTITKDGVSVAREIELEDKFENMGAQMVKEVASKANDVAGDGTTTATVLAQSIVSEGLRAVAAGMNPMDLKRGIDKAVAAVVEELKAISKPCETSKEIEQVGTISANSDETVGKLIAQAMEKVGKEGVITVEDGTGLDDALDVVEGMQFDRGYLSPYFINKPEAGTVELDNPYIILVDKKISNIREILPVLEAVAKAGKPLLIIAEDVEGEALATLVVNTMRGIVKVAAVKAPGFGDRRKAMLQDIAILTAGTVISEEIGMELEKATLEELGQAKRVVITKDNTTIIDGIGDEAQIKARVVQIRQQIEDSTSDYDKEKLQERVAKLAGGVAVIKVGAATEVAMKEKKDRVDDALHATRAAVEEGIVPGGGVALVRAANKVSATLTGDNEEQNVGIKLALRAMEAPLRQIVENSGEDASVVARDVKDGSGNFGYNATTEEYGDMLEMGILDPTKVTRSALQFAASIAGLMITTECMITDLPKEDKLDAQAAMGGMGGMGGMM</sequence>
<proteinExistence type="inferred from homology"/>
<organism>
    <name type="scientific">Haemophilus ducreyi (strain 35000HP / ATCC 700724)</name>
    <dbReference type="NCBI Taxonomy" id="233412"/>
    <lineage>
        <taxon>Bacteria</taxon>
        <taxon>Pseudomonadati</taxon>
        <taxon>Pseudomonadota</taxon>
        <taxon>Gammaproteobacteria</taxon>
        <taxon>Pasteurellales</taxon>
        <taxon>Pasteurellaceae</taxon>
        <taxon>Haemophilus</taxon>
    </lineage>
</organism>
<keyword id="KW-0067">ATP-binding</keyword>
<keyword id="KW-0143">Chaperone</keyword>
<keyword id="KW-0963">Cytoplasm</keyword>
<keyword id="KW-0413">Isomerase</keyword>
<keyword id="KW-0547">Nucleotide-binding</keyword>
<keyword id="KW-1185">Reference proteome</keyword>
<reference key="1">
    <citation type="journal article" date="1992" name="Infect. Immun.">
        <title>Molecular analysis of the Haemophilus ducreyi groE heat shock operon.</title>
        <authorList>
            <person name="Parsons L.M."/>
            <person name="Waring A.L."/>
            <person name="Shayegani M."/>
        </authorList>
    </citation>
    <scope>NUCLEOTIDE SEQUENCE [GENOMIC DNA]</scope>
</reference>
<reference key="2">
    <citation type="submission" date="2003-06" db="EMBL/GenBank/DDBJ databases">
        <title>The complete genome sequence of Haemophilus ducreyi.</title>
        <authorList>
            <person name="Munson R.S. Jr."/>
            <person name="Ray W.C."/>
            <person name="Mahairas G."/>
            <person name="Sabo P."/>
            <person name="Mungur R."/>
            <person name="Johnson L."/>
            <person name="Nguyen D."/>
            <person name="Wang J."/>
            <person name="Forst C."/>
            <person name="Hood L."/>
        </authorList>
    </citation>
    <scope>NUCLEOTIDE SEQUENCE [LARGE SCALE GENOMIC DNA]</scope>
    <source>
        <strain>35000HP / ATCC 700724</strain>
    </source>
</reference>
<gene>
    <name evidence="1" type="primary">groEL</name>
    <name evidence="1" type="synonym">groL</name>
    <name type="synonym">mopA</name>
    <name type="ordered locus">HD_1784</name>
</gene>
<dbReference type="EC" id="5.6.1.7" evidence="1"/>
<dbReference type="EMBL" id="M91030">
    <property type="protein sequence ID" value="AAA24961.1"/>
    <property type="molecule type" value="Genomic_DNA"/>
</dbReference>
<dbReference type="EMBL" id="AE017143">
    <property type="protein sequence ID" value="AAP96536.1"/>
    <property type="molecule type" value="Genomic_DNA"/>
</dbReference>
<dbReference type="PIR" id="B49203">
    <property type="entry name" value="B49203"/>
</dbReference>
<dbReference type="RefSeq" id="WP_010945565.1">
    <property type="nucleotide sequence ID" value="NC_002940.2"/>
</dbReference>
<dbReference type="SMR" id="P31294"/>
<dbReference type="STRING" id="233412.HD_1784"/>
<dbReference type="MoonProt" id="P31294"/>
<dbReference type="KEGG" id="hdu:HD_1784"/>
<dbReference type="eggNOG" id="COG0459">
    <property type="taxonomic scope" value="Bacteria"/>
</dbReference>
<dbReference type="HOGENOM" id="CLU_016503_3_0_6"/>
<dbReference type="OrthoDB" id="9766614at2"/>
<dbReference type="Proteomes" id="UP000001022">
    <property type="component" value="Chromosome"/>
</dbReference>
<dbReference type="GO" id="GO:0005737">
    <property type="term" value="C:cytoplasm"/>
    <property type="evidence" value="ECO:0007669"/>
    <property type="project" value="UniProtKB-SubCell"/>
</dbReference>
<dbReference type="GO" id="GO:0005524">
    <property type="term" value="F:ATP binding"/>
    <property type="evidence" value="ECO:0007669"/>
    <property type="project" value="UniProtKB-UniRule"/>
</dbReference>
<dbReference type="GO" id="GO:0140662">
    <property type="term" value="F:ATP-dependent protein folding chaperone"/>
    <property type="evidence" value="ECO:0007669"/>
    <property type="project" value="InterPro"/>
</dbReference>
<dbReference type="GO" id="GO:0016853">
    <property type="term" value="F:isomerase activity"/>
    <property type="evidence" value="ECO:0007669"/>
    <property type="project" value="UniProtKB-KW"/>
</dbReference>
<dbReference type="GO" id="GO:0051082">
    <property type="term" value="F:unfolded protein binding"/>
    <property type="evidence" value="ECO:0007669"/>
    <property type="project" value="UniProtKB-UniRule"/>
</dbReference>
<dbReference type="GO" id="GO:0042026">
    <property type="term" value="P:protein refolding"/>
    <property type="evidence" value="ECO:0007669"/>
    <property type="project" value="UniProtKB-UniRule"/>
</dbReference>
<dbReference type="CDD" id="cd03344">
    <property type="entry name" value="GroEL"/>
    <property type="match status" value="1"/>
</dbReference>
<dbReference type="FunFam" id="1.10.560.10:FF:000001">
    <property type="entry name" value="60 kDa chaperonin"/>
    <property type="match status" value="1"/>
</dbReference>
<dbReference type="FunFam" id="3.50.7.10:FF:000001">
    <property type="entry name" value="60 kDa chaperonin"/>
    <property type="match status" value="1"/>
</dbReference>
<dbReference type="Gene3D" id="3.50.7.10">
    <property type="entry name" value="GroEL"/>
    <property type="match status" value="1"/>
</dbReference>
<dbReference type="Gene3D" id="1.10.560.10">
    <property type="entry name" value="GroEL-like equatorial domain"/>
    <property type="match status" value="1"/>
</dbReference>
<dbReference type="Gene3D" id="3.30.260.10">
    <property type="entry name" value="TCP-1-like chaperonin intermediate domain"/>
    <property type="match status" value="1"/>
</dbReference>
<dbReference type="HAMAP" id="MF_00600">
    <property type="entry name" value="CH60"/>
    <property type="match status" value="1"/>
</dbReference>
<dbReference type="InterPro" id="IPR018370">
    <property type="entry name" value="Chaperonin_Cpn60_CS"/>
</dbReference>
<dbReference type="InterPro" id="IPR001844">
    <property type="entry name" value="Cpn60/GroEL"/>
</dbReference>
<dbReference type="InterPro" id="IPR002423">
    <property type="entry name" value="Cpn60/GroEL/TCP-1"/>
</dbReference>
<dbReference type="InterPro" id="IPR027409">
    <property type="entry name" value="GroEL-like_apical_dom_sf"/>
</dbReference>
<dbReference type="InterPro" id="IPR027413">
    <property type="entry name" value="GROEL-like_equatorial_sf"/>
</dbReference>
<dbReference type="InterPro" id="IPR027410">
    <property type="entry name" value="TCP-1-like_intermed_sf"/>
</dbReference>
<dbReference type="NCBIfam" id="TIGR02348">
    <property type="entry name" value="GroEL"/>
    <property type="match status" value="1"/>
</dbReference>
<dbReference type="NCBIfam" id="NF000592">
    <property type="entry name" value="PRK00013.1"/>
    <property type="match status" value="1"/>
</dbReference>
<dbReference type="NCBIfam" id="NF009487">
    <property type="entry name" value="PRK12849.1"/>
    <property type="match status" value="1"/>
</dbReference>
<dbReference type="NCBIfam" id="NF009488">
    <property type="entry name" value="PRK12850.1"/>
    <property type="match status" value="1"/>
</dbReference>
<dbReference type="NCBIfam" id="NF009489">
    <property type="entry name" value="PRK12851.1"/>
    <property type="match status" value="1"/>
</dbReference>
<dbReference type="PANTHER" id="PTHR45633">
    <property type="entry name" value="60 KDA HEAT SHOCK PROTEIN, MITOCHONDRIAL"/>
    <property type="match status" value="1"/>
</dbReference>
<dbReference type="Pfam" id="PF00118">
    <property type="entry name" value="Cpn60_TCP1"/>
    <property type="match status" value="1"/>
</dbReference>
<dbReference type="PRINTS" id="PR00298">
    <property type="entry name" value="CHAPERONIN60"/>
</dbReference>
<dbReference type="SUPFAM" id="SSF52029">
    <property type="entry name" value="GroEL apical domain-like"/>
    <property type="match status" value="1"/>
</dbReference>
<dbReference type="SUPFAM" id="SSF48592">
    <property type="entry name" value="GroEL equatorial domain-like"/>
    <property type="match status" value="2"/>
</dbReference>
<dbReference type="PROSITE" id="PS00296">
    <property type="entry name" value="CHAPERONINS_CPN60"/>
    <property type="match status" value="1"/>
</dbReference>
<protein>
    <recommendedName>
        <fullName evidence="1">Chaperonin GroEL</fullName>
        <ecNumber evidence="1">5.6.1.7</ecNumber>
    </recommendedName>
    <alternativeName>
        <fullName evidence="1">60 kDa chaperonin</fullName>
    </alternativeName>
    <alternativeName>
        <fullName evidence="1">Chaperonin-60</fullName>
        <shortName evidence="1">Cpn60</shortName>
    </alternativeName>
</protein>
<feature type="chain" id="PRO_0000063386" description="Chaperonin GroEL">
    <location>
        <begin position="1"/>
        <end position="547"/>
    </location>
</feature>
<feature type="binding site" evidence="1">
    <location>
        <begin position="30"/>
        <end position="33"/>
    </location>
    <ligand>
        <name>ATP</name>
        <dbReference type="ChEBI" id="CHEBI:30616"/>
    </ligand>
</feature>
<feature type="binding site" evidence="1">
    <location>
        <position position="51"/>
    </location>
    <ligand>
        <name>ATP</name>
        <dbReference type="ChEBI" id="CHEBI:30616"/>
    </ligand>
</feature>
<feature type="binding site" evidence="1">
    <location>
        <begin position="87"/>
        <end position="91"/>
    </location>
    <ligand>
        <name>ATP</name>
        <dbReference type="ChEBI" id="CHEBI:30616"/>
    </ligand>
</feature>
<feature type="binding site" evidence="1">
    <location>
        <position position="415"/>
    </location>
    <ligand>
        <name>ATP</name>
        <dbReference type="ChEBI" id="CHEBI:30616"/>
    </ligand>
</feature>
<feature type="binding site" evidence="1">
    <location>
        <position position="496"/>
    </location>
    <ligand>
        <name>ATP</name>
        <dbReference type="ChEBI" id="CHEBI:30616"/>
    </ligand>
</feature>
<feature type="sequence conflict" description="In Ref. 1; AAA24961." evidence="2" ref="1">
    <original>N</original>
    <variation>K</variation>
    <location>
        <position position="37"/>
    </location>
</feature>
<feature type="sequence conflict" description="In Ref. 2; AAP96536." evidence="2" ref="2">
    <original>A</original>
    <variation>V</variation>
    <location>
        <position position="509"/>
    </location>
</feature>